<organism>
    <name type="scientific">Pseudomonas putida (strain ATCC 47054 / DSM 6125 / CFBP 8728 / NCIMB 11950 / KT2440)</name>
    <dbReference type="NCBI Taxonomy" id="160488"/>
    <lineage>
        <taxon>Bacteria</taxon>
        <taxon>Pseudomonadati</taxon>
        <taxon>Pseudomonadota</taxon>
        <taxon>Gammaproteobacteria</taxon>
        <taxon>Pseudomonadales</taxon>
        <taxon>Pseudomonadaceae</taxon>
        <taxon>Pseudomonas</taxon>
    </lineage>
</organism>
<gene>
    <name evidence="1" type="primary">ppc</name>
    <name type="ordered locus">PP_1505</name>
</gene>
<accession>Q88MR4</accession>
<evidence type="ECO:0000255" key="1">
    <source>
        <dbReference type="HAMAP-Rule" id="MF_00595"/>
    </source>
</evidence>
<feature type="chain" id="PRO_0000166614" description="Phosphoenolpyruvate carboxylase">
    <location>
        <begin position="1"/>
        <end position="875"/>
    </location>
</feature>
<feature type="active site" evidence="1">
    <location>
        <position position="137"/>
    </location>
</feature>
<feature type="active site" evidence="1">
    <location>
        <position position="542"/>
    </location>
</feature>
<name>CAPP_PSEPK</name>
<reference key="1">
    <citation type="journal article" date="2002" name="Environ. Microbiol.">
        <title>Complete genome sequence and comparative analysis of the metabolically versatile Pseudomonas putida KT2440.</title>
        <authorList>
            <person name="Nelson K.E."/>
            <person name="Weinel C."/>
            <person name="Paulsen I.T."/>
            <person name="Dodson R.J."/>
            <person name="Hilbert H."/>
            <person name="Martins dos Santos V.A.P."/>
            <person name="Fouts D.E."/>
            <person name="Gill S.R."/>
            <person name="Pop M."/>
            <person name="Holmes M."/>
            <person name="Brinkac L.M."/>
            <person name="Beanan M.J."/>
            <person name="DeBoy R.T."/>
            <person name="Daugherty S.C."/>
            <person name="Kolonay J.F."/>
            <person name="Madupu R."/>
            <person name="Nelson W.C."/>
            <person name="White O."/>
            <person name="Peterson J.D."/>
            <person name="Khouri H.M."/>
            <person name="Hance I."/>
            <person name="Chris Lee P."/>
            <person name="Holtzapple E.K."/>
            <person name="Scanlan D."/>
            <person name="Tran K."/>
            <person name="Moazzez A."/>
            <person name="Utterback T.R."/>
            <person name="Rizzo M."/>
            <person name="Lee K."/>
            <person name="Kosack D."/>
            <person name="Moestl D."/>
            <person name="Wedler H."/>
            <person name="Lauber J."/>
            <person name="Stjepandic D."/>
            <person name="Hoheisel J."/>
            <person name="Straetz M."/>
            <person name="Heim S."/>
            <person name="Kiewitz C."/>
            <person name="Eisen J.A."/>
            <person name="Timmis K.N."/>
            <person name="Duesterhoeft A."/>
            <person name="Tuemmler B."/>
            <person name="Fraser C.M."/>
        </authorList>
    </citation>
    <scope>NUCLEOTIDE SEQUENCE [LARGE SCALE GENOMIC DNA]</scope>
    <source>
        <strain>ATCC 47054 / DSM 6125 / CFBP 8728 / NCIMB 11950 / KT2440</strain>
    </source>
</reference>
<proteinExistence type="inferred from homology"/>
<sequence>MTDIDVRLREDVHVLGELLGETIRQQHGDAFLQKIEDIRHSAKADRRGPGEQLSSTLADLAEEDLLPVARAFNQFLNLANMAEQYQLIRRRDADQPEPFEAQVLPELLGRLKQAGHSNDALARQLAKLDIQLVLTAHPTEVARRTLIQKYDAIAGQLAAQDHRDLTPAERQQVRERLRRLIAEAWHTEEIRRTRPTPVDEAKWGFAVIEHSLWHAIPSHLRKVDKALLEATGLRLPLEAAPIRFASWMGGDRDGNPNVTAAVTREVLLLARWMAADLFLRDIDALAAELSMQQANDTLRKQVGDSAEPYRAVLKQLRDRLRATRAWAHSALTSNQPAGADVLVDNRELIAPLELCYQSLHECGMGVIAEGPLLDCLRRAVTFGLFLGRLDVRQDAARHRDALTEITDYLGLGRYADWDEEQRIAFLQAELKNRRPLLPAHFKPQADTAEVLATCREVAAAPAASLGSYVISMAGAASDVLAVQLLLKEAGLTRPMRVVPLFETLADLDNAGPVMQRLLGLPGYRAGLRGPQEVMIGYSDSAKDAGTTAAAWAQYRAQENLVRICAEHQVELLLFHGRGGTVGRGGGPAHAAILSQPPGSVAGRFRTTEQGEMIRFKFGLPGIAEQNLNLYLAAVLEATLLPPPPPQPAWREVMDQLAADGVQAYRSVVRENPDFVEYFRQSTPEQELGRLPLGSRPAKRRAGGIESLRAIPWIFGWTQTRLMLPAWLGWETALTNALARGQGELLAQMREQWPFFRTRIDMLEMVLAKADAQIAEAYDERLVQPHLRPLGAHLRDLLSQSCQVVLGLTGQPVLLAHSPETLEFISLRNTYLDPLHRLQAELLARSRSREAALDSPLEQALLVTVAGIAAGLRNTG</sequence>
<comment type="function">
    <text evidence="1">Forms oxaloacetate, a four-carbon dicarboxylic acid source for the tricarboxylic acid cycle.</text>
</comment>
<comment type="catalytic activity">
    <reaction evidence="1">
        <text>oxaloacetate + phosphate = phosphoenolpyruvate + hydrogencarbonate</text>
        <dbReference type="Rhea" id="RHEA:28370"/>
        <dbReference type="ChEBI" id="CHEBI:16452"/>
        <dbReference type="ChEBI" id="CHEBI:17544"/>
        <dbReference type="ChEBI" id="CHEBI:43474"/>
        <dbReference type="ChEBI" id="CHEBI:58702"/>
        <dbReference type="EC" id="4.1.1.31"/>
    </reaction>
</comment>
<comment type="cofactor">
    <cofactor evidence="1">
        <name>Mg(2+)</name>
        <dbReference type="ChEBI" id="CHEBI:18420"/>
    </cofactor>
</comment>
<comment type="similarity">
    <text evidence="1">Belongs to the PEPCase type 1 family.</text>
</comment>
<protein>
    <recommendedName>
        <fullName evidence="1">Phosphoenolpyruvate carboxylase</fullName>
        <shortName evidence="1">PEPC</shortName>
        <shortName evidence="1">PEPCase</shortName>
        <ecNumber evidence="1">4.1.1.31</ecNumber>
    </recommendedName>
</protein>
<keyword id="KW-0120">Carbon dioxide fixation</keyword>
<keyword id="KW-0456">Lyase</keyword>
<keyword id="KW-0460">Magnesium</keyword>
<keyword id="KW-1185">Reference proteome</keyword>
<dbReference type="EC" id="4.1.1.31" evidence="1"/>
<dbReference type="EMBL" id="AE015451">
    <property type="protein sequence ID" value="AAN67126.1"/>
    <property type="molecule type" value="Genomic_DNA"/>
</dbReference>
<dbReference type="RefSeq" id="NP_743662.1">
    <property type="nucleotide sequence ID" value="NC_002947.4"/>
</dbReference>
<dbReference type="RefSeq" id="WP_010952597.1">
    <property type="nucleotide sequence ID" value="NZ_CP169744.1"/>
</dbReference>
<dbReference type="SMR" id="Q88MR4"/>
<dbReference type="STRING" id="160488.PP_1505"/>
<dbReference type="PaxDb" id="160488-PP_1505"/>
<dbReference type="GeneID" id="83681961"/>
<dbReference type="KEGG" id="ppu:PP_1505"/>
<dbReference type="PATRIC" id="fig|160488.4.peg.1596"/>
<dbReference type="eggNOG" id="COG2352">
    <property type="taxonomic scope" value="Bacteria"/>
</dbReference>
<dbReference type="HOGENOM" id="CLU_006557_2_0_6"/>
<dbReference type="OrthoDB" id="9768133at2"/>
<dbReference type="PhylomeDB" id="Q88MR4"/>
<dbReference type="BioCyc" id="PPUT160488:G1G01-1596-MONOMER"/>
<dbReference type="Proteomes" id="UP000000556">
    <property type="component" value="Chromosome"/>
</dbReference>
<dbReference type="GO" id="GO:0005829">
    <property type="term" value="C:cytosol"/>
    <property type="evidence" value="ECO:0007669"/>
    <property type="project" value="TreeGrafter"/>
</dbReference>
<dbReference type="GO" id="GO:0000287">
    <property type="term" value="F:magnesium ion binding"/>
    <property type="evidence" value="ECO:0007669"/>
    <property type="project" value="UniProtKB-UniRule"/>
</dbReference>
<dbReference type="GO" id="GO:0008964">
    <property type="term" value="F:phosphoenolpyruvate carboxylase activity"/>
    <property type="evidence" value="ECO:0007669"/>
    <property type="project" value="UniProtKB-UniRule"/>
</dbReference>
<dbReference type="GO" id="GO:0015977">
    <property type="term" value="P:carbon fixation"/>
    <property type="evidence" value="ECO:0007669"/>
    <property type="project" value="UniProtKB-UniRule"/>
</dbReference>
<dbReference type="GO" id="GO:0006107">
    <property type="term" value="P:oxaloacetate metabolic process"/>
    <property type="evidence" value="ECO:0007669"/>
    <property type="project" value="UniProtKB-UniRule"/>
</dbReference>
<dbReference type="GO" id="GO:0006099">
    <property type="term" value="P:tricarboxylic acid cycle"/>
    <property type="evidence" value="ECO:0007669"/>
    <property type="project" value="InterPro"/>
</dbReference>
<dbReference type="Gene3D" id="1.20.1440.90">
    <property type="entry name" value="Phosphoenolpyruvate/pyruvate domain"/>
    <property type="match status" value="1"/>
</dbReference>
<dbReference type="HAMAP" id="MF_00595">
    <property type="entry name" value="PEPcase_type1"/>
    <property type="match status" value="1"/>
</dbReference>
<dbReference type="InterPro" id="IPR021135">
    <property type="entry name" value="PEP_COase"/>
</dbReference>
<dbReference type="InterPro" id="IPR022805">
    <property type="entry name" value="PEP_COase_bac/pln-type"/>
</dbReference>
<dbReference type="InterPro" id="IPR018129">
    <property type="entry name" value="PEP_COase_Lys_AS"/>
</dbReference>
<dbReference type="InterPro" id="IPR033129">
    <property type="entry name" value="PEPCASE_His_AS"/>
</dbReference>
<dbReference type="InterPro" id="IPR015813">
    <property type="entry name" value="Pyrv/PenolPyrv_kinase-like_dom"/>
</dbReference>
<dbReference type="NCBIfam" id="NF000584">
    <property type="entry name" value="PRK00009.1"/>
    <property type="match status" value="1"/>
</dbReference>
<dbReference type="PANTHER" id="PTHR30523">
    <property type="entry name" value="PHOSPHOENOLPYRUVATE CARBOXYLASE"/>
    <property type="match status" value="1"/>
</dbReference>
<dbReference type="PANTHER" id="PTHR30523:SF6">
    <property type="entry name" value="PHOSPHOENOLPYRUVATE CARBOXYLASE"/>
    <property type="match status" value="1"/>
</dbReference>
<dbReference type="Pfam" id="PF00311">
    <property type="entry name" value="PEPcase"/>
    <property type="match status" value="1"/>
</dbReference>
<dbReference type="PRINTS" id="PR00150">
    <property type="entry name" value="PEPCARBXLASE"/>
</dbReference>
<dbReference type="SUPFAM" id="SSF51621">
    <property type="entry name" value="Phosphoenolpyruvate/pyruvate domain"/>
    <property type="match status" value="1"/>
</dbReference>
<dbReference type="PROSITE" id="PS00781">
    <property type="entry name" value="PEPCASE_1"/>
    <property type="match status" value="1"/>
</dbReference>
<dbReference type="PROSITE" id="PS00393">
    <property type="entry name" value="PEPCASE_2"/>
    <property type="match status" value="1"/>
</dbReference>